<keyword id="KW-0002">3D-structure</keyword>
<keyword id="KW-0007">Acetylation</keyword>
<keyword id="KW-0507">mRNA processing</keyword>
<keyword id="KW-0508">mRNA splicing</keyword>
<keyword id="KW-0539">Nucleus</keyword>
<keyword id="KW-0597">Phosphoprotein</keyword>
<keyword id="KW-1267">Proteomics identification</keyword>
<keyword id="KW-1185">Reference proteome</keyword>
<keyword id="KW-0694">RNA-binding</keyword>
<keyword id="KW-0747">Spliceosome</keyword>
<proteinExistence type="evidence at protein level"/>
<accession>Q9BWJ5</accession>
<accession>B2R568</accession>
<accession>Q7RTV1</accession>
<comment type="function">
    <text evidence="1 3 4 6 7 8 9">Component of the 17S U2 SnRNP complex of the spliceosome, a large ribonucleoprotein complex that removes introns from transcribed pre-mRNAs (PubMed:12234937, PubMed:27720643, PubMed:28781166, PubMed:32494006, PubMed:34822310). The 17S U2 SnRNP complex (1) directly participates in early spliceosome assembly and (2) mediates recognition of the intron branch site during pre-mRNA splicing by promoting the selection of the pre-mRNA branch-site adenosine, the nucleophile for the first step of splicing (PubMed:12234937, PubMed:32494006, PubMed:34822310). Within the 17S U2 SnRNP complex, SF3B4 is part of the SF3B subcomplex, which is required for 'A' complex assembly formed by the stable binding of U2 snRNP to the branchpoint sequence in pre-mRNA (PubMed:12234937, PubMed:27720643). Sequence independent binding of SF3A and SF3B subcomplexes upstream of the branch site is essential, it may anchor U2 snRNP to the pre-mRNA (PubMed:12234937). Also acts as a component of the minor spliceosome, which is involved in the splicing of U12-type introns in pre-mRNAs (PubMed:15146077, PubMed:33509932).</text>
</comment>
<comment type="subunit">
    <text evidence="1 2 3 4 5 6 7 8 9 10">Component of the 17S U2 SnRNP complex, a ribonucleoprotein complex that contains small nuclear RNA (snRNA) U2 and a number of specific proteins (PubMed:12234937, PubMed:15146077, PubMed:28781166, PubMed:32494006, PubMed:34822310, PubMed:36797247). Part of the SF3B subcomplex of the 17S U2 SnRNP complex (PubMed:12234937, PubMed:12738865, PubMed:27720643, PubMed:28541300). SF3B associates with the splicing subcomplex SF3A and a 12S RNA unit to form the U2 small nuclear ribonucleoproteins complex (U2 snRNP) (PubMed:12234937). Within the SF3B subcomplex, interacts directly with SF3B1 (via HEAT domain) and SF3B3 (PubMed:27720643). Component of the minor spliceosome, which splices U12-type introns (PubMed:15146077, PubMed:33509932).</text>
</comment>
<comment type="interaction">
    <interactant intactId="EBI-2555428">
        <id>Q9BWJ5</id>
    </interactant>
    <interactant intactId="EBI-2462271">
        <id>Q15428</id>
        <label>SF3A2</label>
    </interactant>
    <organismsDiffer>false</organismsDiffer>
    <experiments>2</experiments>
</comment>
<comment type="interaction">
    <interactant intactId="EBI-2555428">
        <id>Q9BWJ5</id>
    </interactant>
    <interactant intactId="EBI-745021">
        <id>Q96FJ0</id>
        <label>STAMBPL1</label>
    </interactant>
    <organismsDiffer>false</organismsDiffer>
    <experiments>3</experiments>
</comment>
<comment type="interaction">
    <interactant intactId="EBI-2555428">
        <id>Q9BWJ5</id>
    </interactant>
    <interactant intactId="EBI-8451480">
        <id>O75865-2</id>
        <label>TRAPPC6A</label>
    </interactant>
    <organismsDiffer>false</organismsDiffer>
    <experiments>3</experiments>
</comment>
<comment type="subcellular location">
    <subcellularLocation>
        <location evidence="4 5 6">Nucleus</location>
    </subcellularLocation>
</comment>
<comment type="similarity">
    <text evidence="11">Belongs to the SF3B5 family.</text>
</comment>
<feature type="initiator methionine" description="Removed" evidence="19">
    <location>
        <position position="1"/>
    </location>
</feature>
<feature type="chain" id="PRO_0000220757" description="Splicing factor 3B subunit 5">
    <location>
        <begin position="2"/>
        <end position="86"/>
    </location>
</feature>
<feature type="region of interest" description="Interaction with SF3B1 and SF3B3" evidence="4">
    <location>
        <begin position="15"/>
        <end position="76"/>
    </location>
</feature>
<feature type="site" description="Interaction with RNA" evidence="4">
    <location>
        <position position="5"/>
    </location>
</feature>
<feature type="site" description="Interaction with RNA" evidence="4">
    <location>
        <position position="20"/>
    </location>
</feature>
<feature type="modified residue" description="N-acetylthreonine" evidence="19">
    <location>
        <position position="2"/>
    </location>
</feature>
<feature type="modified residue" description="Phosphoserine" evidence="18">
    <location>
        <position position="9"/>
    </location>
</feature>
<feature type="modified residue" description="N6-acetyllysine" evidence="20">
    <location>
        <position position="17"/>
    </location>
</feature>
<feature type="helix" evidence="21">
    <location>
        <begin position="13"/>
        <end position="17"/>
    </location>
</feature>
<feature type="helix" evidence="22">
    <location>
        <begin position="28"/>
        <end position="45"/>
    </location>
</feature>
<feature type="helix" evidence="22">
    <location>
        <begin position="47"/>
        <end position="57"/>
    </location>
</feature>
<feature type="helix" evidence="22">
    <location>
        <begin position="61"/>
        <end position="71"/>
    </location>
</feature>
<feature type="strand" evidence="23">
    <location>
        <begin position="72"/>
        <end position="74"/>
    </location>
</feature>
<gene>
    <name type="primary">SF3B5</name>
    <name type="synonym">SF3B10</name>
</gene>
<sequence>MTDRYTIHSQLEHLQSKYIGTGHADTTKWEWLVNQHRDSYCSYMGHFDLLNYFAIAENESKARVRFNLMEKMLQPCGPPADKPEEN</sequence>
<reference key="1">
    <citation type="journal article" date="2004" name="Nat. Genet.">
        <title>Complete sequencing and characterization of 21,243 full-length human cDNAs.</title>
        <authorList>
            <person name="Ota T."/>
            <person name="Suzuki Y."/>
            <person name="Nishikawa T."/>
            <person name="Otsuki T."/>
            <person name="Sugiyama T."/>
            <person name="Irie R."/>
            <person name="Wakamatsu A."/>
            <person name="Hayashi K."/>
            <person name="Sato H."/>
            <person name="Nagai K."/>
            <person name="Kimura K."/>
            <person name="Makita H."/>
            <person name="Sekine M."/>
            <person name="Obayashi M."/>
            <person name="Nishi T."/>
            <person name="Shibahara T."/>
            <person name="Tanaka T."/>
            <person name="Ishii S."/>
            <person name="Yamamoto J."/>
            <person name="Saito K."/>
            <person name="Kawai Y."/>
            <person name="Isono Y."/>
            <person name="Nakamura Y."/>
            <person name="Nagahari K."/>
            <person name="Murakami K."/>
            <person name="Yasuda T."/>
            <person name="Iwayanagi T."/>
            <person name="Wagatsuma M."/>
            <person name="Shiratori A."/>
            <person name="Sudo H."/>
            <person name="Hosoiri T."/>
            <person name="Kaku Y."/>
            <person name="Kodaira H."/>
            <person name="Kondo H."/>
            <person name="Sugawara M."/>
            <person name="Takahashi M."/>
            <person name="Kanda K."/>
            <person name="Yokoi T."/>
            <person name="Furuya T."/>
            <person name="Kikkawa E."/>
            <person name="Omura Y."/>
            <person name="Abe K."/>
            <person name="Kamihara K."/>
            <person name="Katsuta N."/>
            <person name="Sato K."/>
            <person name="Tanikawa M."/>
            <person name="Yamazaki M."/>
            <person name="Ninomiya K."/>
            <person name="Ishibashi T."/>
            <person name="Yamashita H."/>
            <person name="Murakawa K."/>
            <person name="Fujimori K."/>
            <person name="Tanai H."/>
            <person name="Kimata M."/>
            <person name="Watanabe M."/>
            <person name="Hiraoka S."/>
            <person name="Chiba Y."/>
            <person name="Ishida S."/>
            <person name="Ono Y."/>
            <person name="Takiguchi S."/>
            <person name="Watanabe S."/>
            <person name="Yosida M."/>
            <person name="Hotuta T."/>
            <person name="Kusano J."/>
            <person name="Kanehori K."/>
            <person name="Takahashi-Fujii A."/>
            <person name="Hara H."/>
            <person name="Tanase T.-O."/>
            <person name="Nomura Y."/>
            <person name="Togiya S."/>
            <person name="Komai F."/>
            <person name="Hara R."/>
            <person name="Takeuchi K."/>
            <person name="Arita M."/>
            <person name="Imose N."/>
            <person name="Musashino K."/>
            <person name="Yuuki H."/>
            <person name="Oshima A."/>
            <person name="Sasaki N."/>
            <person name="Aotsuka S."/>
            <person name="Yoshikawa Y."/>
            <person name="Matsunawa H."/>
            <person name="Ichihara T."/>
            <person name="Shiohata N."/>
            <person name="Sano S."/>
            <person name="Moriya S."/>
            <person name="Momiyama H."/>
            <person name="Satoh N."/>
            <person name="Takami S."/>
            <person name="Terashima Y."/>
            <person name="Suzuki O."/>
            <person name="Nakagawa S."/>
            <person name="Senoh A."/>
            <person name="Mizoguchi H."/>
            <person name="Goto Y."/>
            <person name="Shimizu F."/>
            <person name="Wakebe H."/>
            <person name="Hishigaki H."/>
            <person name="Watanabe T."/>
            <person name="Sugiyama A."/>
            <person name="Takemoto M."/>
            <person name="Kawakami B."/>
            <person name="Yamazaki M."/>
            <person name="Watanabe K."/>
            <person name="Kumagai A."/>
            <person name="Itakura S."/>
            <person name="Fukuzumi Y."/>
            <person name="Fujimori Y."/>
            <person name="Komiyama M."/>
            <person name="Tashiro H."/>
            <person name="Tanigami A."/>
            <person name="Fujiwara T."/>
            <person name="Ono T."/>
            <person name="Yamada K."/>
            <person name="Fujii Y."/>
            <person name="Ozaki K."/>
            <person name="Hirao M."/>
            <person name="Ohmori Y."/>
            <person name="Kawabata A."/>
            <person name="Hikiji T."/>
            <person name="Kobatake N."/>
            <person name="Inagaki H."/>
            <person name="Ikema Y."/>
            <person name="Okamoto S."/>
            <person name="Okitani R."/>
            <person name="Kawakami T."/>
            <person name="Noguchi S."/>
            <person name="Itoh T."/>
            <person name="Shigeta K."/>
            <person name="Senba T."/>
            <person name="Matsumura K."/>
            <person name="Nakajima Y."/>
            <person name="Mizuno T."/>
            <person name="Morinaga M."/>
            <person name="Sasaki M."/>
            <person name="Togashi T."/>
            <person name="Oyama M."/>
            <person name="Hata H."/>
            <person name="Watanabe M."/>
            <person name="Komatsu T."/>
            <person name="Mizushima-Sugano J."/>
            <person name="Satoh T."/>
            <person name="Shirai Y."/>
            <person name="Takahashi Y."/>
            <person name="Nakagawa K."/>
            <person name="Okumura K."/>
            <person name="Nagase T."/>
            <person name="Nomura N."/>
            <person name="Kikuchi H."/>
            <person name="Masuho Y."/>
            <person name="Yamashita R."/>
            <person name="Nakai K."/>
            <person name="Yada T."/>
            <person name="Nakamura Y."/>
            <person name="Ohara O."/>
            <person name="Isogai T."/>
            <person name="Sugano S."/>
        </authorList>
    </citation>
    <scope>NUCLEOTIDE SEQUENCE [LARGE SCALE MRNA]</scope>
    <source>
        <tissue>Tongue</tissue>
    </source>
</reference>
<reference key="2">
    <citation type="journal article" date="2003" name="Nature">
        <title>The DNA sequence and analysis of human chromosome 6.</title>
        <authorList>
            <person name="Mungall A.J."/>
            <person name="Palmer S.A."/>
            <person name="Sims S.K."/>
            <person name="Edwards C.A."/>
            <person name="Ashurst J.L."/>
            <person name="Wilming L."/>
            <person name="Jones M.C."/>
            <person name="Horton R."/>
            <person name="Hunt S.E."/>
            <person name="Scott C.E."/>
            <person name="Gilbert J.G.R."/>
            <person name="Clamp M.E."/>
            <person name="Bethel G."/>
            <person name="Milne S."/>
            <person name="Ainscough R."/>
            <person name="Almeida J.P."/>
            <person name="Ambrose K.D."/>
            <person name="Andrews T.D."/>
            <person name="Ashwell R.I.S."/>
            <person name="Babbage A.K."/>
            <person name="Bagguley C.L."/>
            <person name="Bailey J."/>
            <person name="Banerjee R."/>
            <person name="Barker D.J."/>
            <person name="Barlow K.F."/>
            <person name="Bates K."/>
            <person name="Beare D.M."/>
            <person name="Beasley H."/>
            <person name="Beasley O."/>
            <person name="Bird C.P."/>
            <person name="Blakey S.E."/>
            <person name="Bray-Allen S."/>
            <person name="Brook J."/>
            <person name="Brown A.J."/>
            <person name="Brown J.Y."/>
            <person name="Burford D.C."/>
            <person name="Burrill W."/>
            <person name="Burton J."/>
            <person name="Carder C."/>
            <person name="Carter N.P."/>
            <person name="Chapman J.C."/>
            <person name="Clark S.Y."/>
            <person name="Clark G."/>
            <person name="Clee C.M."/>
            <person name="Clegg S."/>
            <person name="Cobley V."/>
            <person name="Collier R.E."/>
            <person name="Collins J.E."/>
            <person name="Colman L.K."/>
            <person name="Corby N.R."/>
            <person name="Coville G.J."/>
            <person name="Culley K.M."/>
            <person name="Dhami P."/>
            <person name="Davies J."/>
            <person name="Dunn M."/>
            <person name="Earthrowl M.E."/>
            <person name="Ellington A.E."/>
            <person name="Evans K.A."/>
            <person name="Faulkner L."/>
            <person name="Francis M.D."/>
            <person name="Frankish A."/>
            <person name="Frankland J."/>
            <person name="French L."/>
            <person name="Garner P."/>
            <person name="Garnett J."/>
            <person name="Ghori M.J."/>
            <person name="Gilby L.M."/>
            <person name="Gillson C.J."/>
            <person name="Glithero R.J."/>
            <person name="Grafham D.V."/>
            <person name="Grant M."/>
            <person name="Gribble S."/>
            <person name="Griffiths C."/>
            <person name="Griffiths M.N.D."/>
            <person name="Hall R."/>
            <person name="Halls K.S."/>
            <person name="Hammond S."/>
            <person name="Harley J.L."/>
            <person name="Hart E.A."/>
            <person name="Heath P.D."/>
            <person name="Heathcott R."/>
            <person name="Holmes S.J."/>
            <person name="Howden P.J."/>
            <person name="Howe K.L."/>
            <person name="Howell G.R."/>
            <person name="Huckle E."/>
            <person name="Humphray S.J."/>
            <person name="Humphries M.D."/>
            <person name="Hunt A.R."/>
            <person name="Johnson C.M."/>
            <person name="Joy A.A."/>
            <person name="Kay M."/>
            <person name="Keenan S.J."/>
            <person name="Kimberley A.M."/>
            <person name="King A."/>
            <person name="Laird G.K."/>
            <person name="Langford C."/>
            <person name="Lawlor S."/>
            <person name="Leongamornlert D.A."/>
            <person name="Leversha M."/>
            <person name="Lloyd C.R."/>
            <person name="Lloyd D.M."/>
            <person name="Loveland J.E."/>
            <person name="Lovell J."/>
            <person name="Martin S."/>
            <person name="Mashreghi-Mohammadi M."/>
            <person name="Maslen G.L."/>
            <person name="Matthews L."/>
            <person name="McCann O.T."/>
            <person name="McLaren S.J."/>
            <person name="McLay K."/>
            <person name="McMurray A."/>
            <person name="Moore M.J.F."/>
            <person name="Mullikin J.C."/>
            <person name="Niblett D."/>
            <person name="Nickerson T."/>
            <person name="Novik K.L."/>
            <person name="Oliver K."/>
            <person name="Overton-Larty E.K."/>
            <person name="Parker A."/>
            <person name="Patel R."/>
            <person name="Pearce A.V."/>
            <person name="Peck A.I."/>
            <person name="Phillimore B.J.C.T."/>
            <person name="Phillips S."/>
            <person name="Plumb R.W."/>
            <person name="Porter K.M."/>
            <person name="Ramsey Y."/>
            <person name="Ranby S.A."/>
            <person name="Rice C.M."/>
            <person name="Ross M.T."/>
            <person name="Searle S.M."/>
            <person name="Sehra H.K."/>
            <person name="Sheridan E."/>
            <person name="Skuce C.D."/>
            <person name="Smith S."/>
            <person name="Smith M."/>
            <person name="Spraggon L."/>
            <person name="Squares S.L."/>
            <person name="Steward C.A."/>
            <person name="Sycamore N."/>
            <person name="Tamlyn-Hall G."/>
            <person name="Tester J."/>
            <person name="Theaker A.J."/>
            <person name="Thomas D.W."/>
            <person name="Thorpe A."/>
            <person name="Tracey A."/>
            <person name="Tromans A."/>
            <person name="Tubby B."/>
            <person name="Wall M."/>
            <person name="Wallis J.M."/>
            <person name="West A.P."/>
            <person name="White S.S."/>
            <person name="Whitehead S.L."/>
            <person name="Whittaker H."/>
            <person name="Wild A."/>
            <person name="Willey D.J."/>
            <person name="Wilmer T.E."/>
            <person name="Wood J.M."/>
            <person name="Wray P.W."/>
            <person name="Wyatt J.C."/>
            <person name="Young L."/>
            <person name="Younger R.M."/>
            <person name="Bentley D.R."/>
            <person name="Coulson A."/>
            <person name="Durbin R.M."/>
            <person name="Hubbard T."/>
            <person name="Sulston J.E."/>
            <person name="Dunham I."/>
            <person name="Rogers J."/>
            <person name="Beck S."/>
        </authorList>
    </citation>
    <scope>NUCLEOTIDE SEQUENCE [LARGE SCALE GENOMIC DNA]</scope>
</reference>
<reference key="3">
    <citation type="submission" date="2005-09" db="EMBL/GenBank/DDBJ databases">
        <authorList>
            <person name="Mural R.J."/>
            <person name="Istrail S."/>
            <person name="Sutton G.G."/>
            <person name="Florea L."/>
            <person name="Halpern A.L."/>
            <person name="Mobarry C.M."/>
            <person name="Lippert R."/>
            <person name="Walenz B."/>
            <person name="Shatkay H."/>
            <person name="Dew I."/>
            <person name="Miller J.R."/>
            <person name="Flanigan M.J."/>
            <person name="Edwards N.J."/>
            <person name="Bolanos R."/>
            <person name="Fasulo D."/>
            <person name="Halldorsson B.V."/>
            <person name="Hannenhalli S."/>
            <person name="Turner R."/>
            <person name="Yooseph S."/>
            <person name="Lu F."/>
            <person name="Nusskern D.R."/>
            <person name="Shue B.C."/>
            <person name="Zheng X.H."/>
            <person name="Zhong F."/>
            <person name="Delcher A.L."/>
            <person name="Huson D.H."/>
            <person name="Kravitz S.A."/>
            <person name="Mouchard L."/>
            <person name="Reinert K."/>
            <person name="Remington K.A."/>
            <person name="Clark A.G."/>
            <person name="Waterman M.S."/>
            <person name="Eichler E.E."/>
            <person name="Adams M.D."/>
            <person name="Hunkapiller M.W."/>
            <person name="Myers E.W."/>
            <person name="Venter J.C."/>
        </authorList>
    </citation>
    <scope>NUCLEOTIDE SEQUENCE [LARGE SCALE GENOMIC DNA]</scope>
</reference>
<reference key="4">
    <citation type="journal article" date="2004" name="Genome Res.">
        <title>The status, quality, and expansion of the NIH full-length cDNA project: the Mammalian Gene Collection (MGC).</title>
        <authorList>
            <consortium name="The MGC Project Team"/>
        </authorList>
    </citation>
    <scope>NUCLEOTIDE SEQUENCE [LARGE SCALE MRNA]</scope>
    <source>
        <tissue>Eye</tissue>
    </source>
</reference>
<reference key="5">
    <citation type="journal article" date="2002" name="EMBO J.">
        <title>Characterization of novel SF3b and 17S U2 snRNP proteins, including a human Prp5p homologue and an SF3b DEAD-box protein.</title>
        <authorList>
            <person name="Will C.L."/>
            <person name="Urlaub H."/>
            <person name="Achsel T."/>
            <person name="Gentzel M."/>
            <person name="Wilm M."/>
            <person name="Luehrmann R."/>
        </authorList>
    </citation>
    <scope>IDENTIFICATION</scope>
    <scope>IDENTIFICATION IN THE SF3B COMPLEX</scope>
</reference>
<reference key="6">
    <citation type="journal article" date="2003" name="Science">
        <title>Molecular architecture of the multiprotein splicing factor SF3b.</title>
        <authorList>
            <person name="Golas M.M."/>
            <person name="Sander B."/>
            <person name="Will C.L."/>
            <person name="Luhrmann R."/>
            <person name="Stark H."/>
        </authorList>
    </citation>
    <scope>IDENTIFICATION IN THE SF3B COMPLEX</scope>
    <scope>ELECTRON MICROSCOPY OF THE SF3B COMPLEX</scope>
</reference>
<reference key="7">
    <citation type="journal article" date="2004" name="RNA">
        <title>The human 18S U11/U12 snRNP contains a set of novel proteins not found in the U2-dependent spliceosome.</title>
        <authorList>
            <person name="Will C.L."/>
            <person name="Schneider C."/>
            <person name="Hossbach M."/>
            <person name="Urlaub H."/>
            <person name="Rauhut R."/>
            <person name="Elbashir S."/>
            <person name="Tuschl T."/>
            <person name="Luehrmann R."/>
        </authorList>
    </citation>
    <scope>IDENTIFICATION IN A COMPLEX WITH THE MINOR SPLICEOSOME</scope>
    <scope>FUNCTION</scope>
    <scope>IDENTIFICATION BY MASS SPECTROMETRY</scope>
</reference>
<reference key="8">
    <citation type="journal article" date="2007" name="Science">
        <title>ATM and ATR substrate analysis reveals extensive protein networks responsive to DNA damage.</title>
        <authorList>
            <person name="Matsuoka S."/>
            <person name="Ballif B.A."/>
            <person name="Smogorzewska A."/>
            <person name="McDonald E.R. III"/>
            <person name="Hurov K.E."/>
            <person name="Luo J."/>
            <person name="Bakalarski C.E."/>
            <person name="Zhao Z."/>
            <person name="Solimini N."/>
            <person name="Lerenthal Y."/>
            <person name="Shiloh Y."/>
            <person name="Gygi S.P."/>
            <person name="Elledge S.J."/>
        </authorList>
    </citation>
    <scope>PHOSPHORYLATION [LARGE SCALE ANALYSIS] AT SER-9</scope>
    <scope>IDENTIFICATION BY MASS SPECTROMETRY [LARGE SCALE ANALYSIS]</scope>
    <source>
        <tissue>Embryonic kidney</tissue>
    </source>
</reference>
<reference key="9">
    <citation type="journal article" date="2009" name="Anal. Chem.">
        <title>Lys-N and trypsin cover complementary parts of the phosphoproteome in a refined SCX-based approach.</title>
        <authorList>
            <person name="Gauci S."/>
            <person name="Helbig A.O."/>
            <person name="Slijper M."/>
            <person name="Krijgsveld J."/>
            <person name="Heck A.J."/>
            <person name="Mohammed S."/>
        </authorList>
    </citation>
    <scope>ACETYLATION [LARGE SCALE ANALYSIS] AT THR-2</scope>
    <scope>CLEAVAGE OF INITIATOR METHIONINE [LARGE SCALE ANALYSIS]</scope>
    <scope>IDENTIFICATION BY MASS SPECTROMETRY [LARGE SCALE ANALYSIS]</scope>
</reference>
<reference key="10">
    <citation type="journal article" date="2009" name="Science">
        <title>Lysine acetylation targets protein complexes and co-regulates major cellular functions.</title>
        <authorList>
            <person name="Choudhary C."/>
            <person name="Kumar C."/>
            <person name="Gnad F."/>
            <person name="Nielsen M.L."/>
            <person name="Rehman M."/>
            <person name="Walther T.C."/>
            <person name="Olsen J.V."/>
            <person name="Mann M."/>
        </authorList>
    </citation>
    <scope>ACETYLATION [LARGE SCALE ANALYSIS] AT LYS-17</scope>
    <scope>IDENTIFICATION BY MASS SPECTROMETRY [LARGE SCALE ANALYSIS]</scope>
</reference>
<reference key="11">
    <citation type="journal article" date="2011" name="BMC Syst. Biol.">
        <title>Initial characterization of the human central proteome.</title>
        <authorList>
            <person name="Burkard T.R."/>
            <person name="Planyavsky M."/>
            <person name="Kaupe I."/>
            <person name="Breitwieser F.P."/>
            <person name="Buerckstuemmer T."/>
            <person name="Bennett K.L."/>
            <person name="Superti-Furga G."/>
            <person name="Colinge J."/>
        </authorList>
    </citation>
    <scope>IDENTIFICATION BY MASS SPECTROMETRY [LARGE SCALE ANALYSIS]</scope>
</reference>
<reference key="12">
    <citation type="journal article" date="2017" name="Nat. Commun.">
        <title>Splicing modulators act at the branch point adenosine binding pocket defined by the PHF5A-SF3b complex.</title>
        <authorList>
            <person name="Teng T."/>
            <person name="Tsai J.H."/>
            <person name="Puyang X."/>
            <person name="Seiler M."/>
            <person name="Peng S."/>
            <person name="Prajapati S."/>
            <person name="Aird D."/>
            <person name="Buonamici S."/>
            <person name="Caleb B."/>
            <person name="Chan B."/>
            <person name="Corson L."/>
            <person name="Feala J."/>
            <person name="Fekkes P."/>
            <person name="Gerard B."/>
            <person name="Karr C."/>
            <person name="Korpal M."/>
            <person name="Liu X."/>
            <person name="Lowe J.T."/>
            <person name="Mizui Y."/>
            <person name="Palacino J."/>
            <person name="Park E."/>
            <person name="Smith P.G."/>
            <person name="Subramanian V."/>
            <person name="Wu Z.J."/>
            <person name="Zou J."/>
            <person name="Yu L."/>
            <person name="Chicas A."/>
            <person name="Warmuth M."/>
            <person name="Larsen N."/>
            <person name="Zhu P."/>
        </authorList>
    </citation>
    <scope>IDENTIFICATION BY MASS SPECTROMETRY</scope>
    <scope>IDENTIFICATION IN THE SF3B COMPLEX</scope>
    <scope>SUBCELLULAR LOCATION</scope>
</reference>
<reference key="13">
    <citation type="journal article" date="2016" name="Mol. Cell">
        <title>Molecular architecture of SF3b and structural consequences of its cancer-related mutations.</title>
        <authorList>
            <person name="Cretu C."/>
            <person name="Schmitzova J."/>
            <person name="Ponce-Salvatierra A."/>
            <person name="Dybkov O."/>
            <person name="De Laurentiis E.I."/>
            <person name="Sharma K."/>
            <person name="Will C.L."/>
            <person name="Urlaub H."/>
            <person name="Luehrmann R."/>
            <person name="Pena V."/>
        </authorList>
    </citation>
    <scope>X-RAY CRYSTALLOGRAPHY (3.10 ANGSTROMS) IN COMPLEX WITH SF3B1; SF3B3 AND PHF5A</scope>
    <scope>FUNCTION</scope>
    <scope>INTERACTION WITH SF3B1 AND SF3B3</scope>
    <scope>IDENTIFICATION IN THE SF3B COMPLEX</scope>
    <scope>SUBUNIT</scope>
    <scope>SUBCELLULAR LOCATION</scope>
    <scope>RNA-BINDING</scope>
</reference>
<reference evidence="12" key="14">
    <citation type="journal article" date="2017" name="Cell">
        <title>Cryo-EM Structure of a Pre-catalytic Human Spliceosome Primed for Activation.</title>
        <authorList>
            <person name="Bertram K."/>
            <person name="Agafonov D.E."/>
            <person name="Dybkov O."/>
            <person name="Haselbach D."/>
            <person name="Leelaram M.N."/>
            <person name="Will C.L."/>
            <person name="Urlaub H."/>
            <person name="Kastner B."/>
            <person name="Luhrmann R."/>
            <person name="Stark H."/>
        </authorList>
    </citation>
    <scope>STRUCTURE BY ELECTRON MICROSCOPY (4.50 ANGSTROMS)</scope>
    <scope>FUNCTION</scope>
    <scope>SUBUNIT</scope>
    <scope>SUBCELLULAR LOCATION</scope>
    <scope>IDENTIFICATION BY MASS SPECTROMETRY</scope>
</reference>
<reference evidence="13 14" key="15">
    <citation type="journal article" date="2020" name="Nature">
        <title>Molecular architecture of the human 17S U2 snRNP.</title>
        <authorList>
            <person name="Zhang Z."/>
            <person name="Will C.L."/>
            <person name="Bertram K."/>
            <person name="Dybkov O."/>
            <person name="Hartmuth K."/>
            <person name="Agafonov D.E."/>
            <person name="Hofele R."/>
            <person name="Urlaub H."/>
            <person name="Kastner B."/>
            <person name="Luehrmann R."/>
            <person name="Stark H."/>
        </authorList>
    </citation>
    <scope>STRUCTURE BY ELECTRON MICROSCOPY (4.10 ANGSTROMS) IN COMPLEX WITH THE 17S U2 SNRNP COMPLEX</scope>
    <scope>FUNCTION</scope>
    <scope>IDENTIFICATION IN THE 17S U2 SNRNP COMPLEX</scope>
</reference>
<reference evidence="15" key="16">
    <citation type="journal article" date="2021" name="Science">
        <title>Structure of the activated human minor spliceosome.</title>
        <authorList>
            <person name="Bai R."/>
            <person name="Wan R."/>
            <person name="Wang L."/>
            <person name="Xu K."/>
            <person name="Zhang Q."/>
            <person name="Lei J."/>
            <person name="Shi Y."/>
        </authorList>
    </citation>
    <scope>STRUCTURE BY ELECTRON MICROSCOPY (2.89 ANGSTROMS)</scope>
    <scope>FUNCTION</scope>
    <scope>SUBUNIT</scope>
</reference>
<reference evidence="16" key="17">
    <citation type="journal article" date="2022" name="Science">
        <title>Structural basis of branch site recognition by the human spliceosome.</title>
        <authorList>
            <person name="Tholen J."/>
            <person name="Razew M."/>
            <person name="Weis F."/>
            <person name="Galej W.P."/>
        </authorList>
    </citation>
    <scope>STRUCTURE BY ELECTRON MICROSCOPY (2.30 ANGSTROMS) IN COMPLEX WITH THE 17S U2 SNRNP COMPLEX</scope>
    <scope>FUNCTION</scope>
    <scope>IDENTIFICATION IN THE 17S U2 SNRNP COMPLEX</scope>
</reference>
<reference evidence="17" key="18">
    <citation type="journal article" date="2023" name="Nat. Commun.">
        <title>Mechanisms of the RNA helicases DDX42 and DDX46 in human U2 snRNP assembly.</title>
        <authorList>
            <person name="Yang F."/>
            <person name="Bian T."/>
            <person name="Zhan X."/>
            <person name="Chen Z."/>
            <person name="Xing Z."/>
            <person name="Larsen N.A."/>
            <person name="Zhang X."/>
            <person name="Shi Y."/>
        </authorList>
    </citation>
    <scope>STRUCTURE BY ELECTRON MICROSCOPY (2.70 ANGSTROMS) IN COMPLEX WITH THE 17S U2 SNRNP COMPLEX</scope>
    <scope>IDENTIFICATION IN THE 17S U2 SNRNP COMPLEX</scope>
</reference>
<dbReference type="EMBL" id="AK312079">
    <property type="protein sequence ID" value="BAG35015.1"/>
    <property type="molecule type" value="mRNA"/>
</dbReference>
<dbReference type="EMBL" id="AL031390">
    <property type="status" value="NOT_ANNOTATED_CDS"/>
    <property type="molecule type" value="Genomic_DNA"/>
</dbReference>
<dbReference type="EMBL" id="CH471051">
    <property type="protein sequence ID" value="EAW47851.1"/>
    <property type="molecule type" value="Genomic_DNA"/>
</dbReference>
<dbReference type="EMBL" id="BC000198">
    <property type="protein sequence ID" value="AAH00198.1"/>
    <property type="molecule type" value="mRNA"/>
</dbReference>
<dbReference type="EMBL" id="BK000562">
    <property type="protein sequence ID" value="DAA00073.1"/>
    <property type="molecule type" value="Genomic_DNA"/>
</dbReference>
<dbReference type="CCDS" id="CCDS5204.1"/>
<dbReference type="RefSeq" id="NP_112577.1">
    <property type="nucleotide sequence ID" value="NM_031287.3"/>
</dbReference>
<dbReference type="PDB" id="5IFE">
    <property type="method" value="X-ray"/>
    <property type="resolution" value="3.10 A"/>
    <property type="chains" value="B=1-86"/>
</dbReference>
<dbReference type="PDB" id="5O9Z">
    <property type="method" value="EM"/>
    <property type="resolution" value="4.50 A"/>
    <property type="chains" value="x=1-86"/>
</dbReference>
<dbReference type="PDB" id="5Z56">
    <property type="method" value="EM"/>
    <property type="resolution" value="5.10 A"/>
    <property type="chains" value="7=1-86"/>
</dbReference>
<dbReference type="PDB" id="5Z57">
    <property type="method" value="EM"/>
    <property type="resolution" value="6.50 A"/>
    <property type="chains" value="7=1-86"/>
</dbReference>
<dbReference type="PDB" id="5Z58">
    <property type="method" value="EM"/>
    <property type="resolution" value="4.90 A"/>
    <property type="chains" value="7=1-86"/>
</dbReference>
<dbReference type="PDB" id="5ZYA">
    <property type="method" value="EM"/>
    <property type="resolution" value="3.95 A"/>
    <property type="chains" value="B=1-86"/>
</dbReference>
<dbReference type="PDB" id="6AH0">
    <property type="method" value="EM"/>
    <property type="resolution" value="5.70 A"/>
    <property type="chains" value="7=1-86"/>
</dbReference>
<dbReference type="PDB" id="6EN4">
    <property type="method" value="X-ray"/>
    <property type="resolution" value="3.08 A"/>
    <property type="chains" value="B=2-86"/>
</dbReference>
<dbReference type="PDB" id="6FF4">
    <property type="method" value="EM"/>
    <property type="resolution" value="16.00 A"/>
    <property type="chains" value="x=1-86"/>
</dbReference>
<dbReference type="PDB" id="6FF7">
    <property type="method" value="EM"/>
    <property type="resolution" value="4.50 A"/>
    <property type="chains" value="x=1-86"/>
</dbReference>
<dbReference type="PDB" id="6QX9">
    <property type="method" value="EM"/>
    <property type="resolution" value="3.28 A"/>
    <property type="chains" value="B5=1-86"/>
</dbReference>
<dbReference type="PDB" id="6Y50">
    <property type="method" value="EM"/>
    <property type="resolution" value="4.10 A"/>
    <property type="chains" value="x=1-86"/>
</dbReference>
<dbReference type="PDB" id="6Y5Q">
    <property type="method" value="EM"/>
    <property type="resolution" value="7.10 A"/>
    <property type="chains" value="x=1-86"/>
</dbReference>
<dbReference type="PDB" id="7ABG">
    <property type="method" value="EM"/>
    <property type="resolution" value="7.80 A"/>
    <property type="chains" value="x=1-86"/>
</dbReference>
<dbReference type="PDB" id="7ABH">
    <property type="method" value="EM"/>
    <property type="resolution" value="4.50 A"/>
    <property type="chains" value="x=1-86"/>
</dbReference>
<dbReference type="PDB" id="7ABI">
    <property type="method" value="EM"/>
    <property type="resolution" value="8.00 A"/>
    <property type="chains" value="x=1-86"/>
</dbReference>
<dbReference type="PDB" id="7B0I">
    <property type="method" value="X-ray"/>
    <property type="resolution" value="3.00 A"/>
    <property type="chains" value="B=1-86"/>
</dbReference>
<dbReference type="PDB" id="7B91">
    <property type="method" value="X-ray"/>
    <property type="resolution" value="3.00 A"/>
    <property type="chains" value="B=1-86"/>
</dbReference>
<dbReference type="PDB" id="7B92">
    <property type="method" value="X-ray"/>
    <property type="resolution" value="3.00 A"/>
    <property type="chains" value="B=1-86"/>
</dbReference>
<dbReference type="PDB" id="7B9C">
    <property type="method" value="X-ray"/>
    <property type="resolution" value="2.40 A"/>
    <property type="chains" value="B=1-86"/>
</dbReference>
<dbReference type="PDB" id="7DVQ">
    <property type="method" value="EM"/>
    <property type="resolution" value="2.89 A"/>
    <property type="chains" value="7=1-86"/>
</dbReference>
<dbReference type="PDB" id="7EVN">
    <property type="method" value="EM"/>
    <property type="resolution" value="2.60 A"/>
    <property type="chains" value="B=1-86"/>
</dbReference>
<dbReference type="PDB" id="7EVO">
    <property type="method" value="EM"/>
    <property type="resolution" value="2.50 A"/>
    <property type="chains" value="5=1-86"/>
</dbReference>
<dbReference type="PDB" id="7KTS">
    <property type="method" value="EM"/>
    <property type="resolution" value="19.09 A"/>
    <property type="chains" value="T=1-86"/>
</dbReference>
<dbReference type="PDB" id="7OMF">
    <property type="method" value="X-ray"/>
    <property type="resolution" value="3.00 A"/>
    <property type="chains" value="B=1-86"/>
</dbReference>
<dbReference type="PDB" id="7ONB">
    <property type="method" value="EM"/>
    <property type="resolution" value="3.10 A"/>
    <property type="chains" value="B=1-86"/>
</dbReference>
<dbReference type="PDB" id="7OPI">
    <property type="method" value="X-ray"/>
    <property type="resolution" value="3.10 A"/>
    <property type="chains" value="B=1-86"/>
</dbReference>
<dbReference type="PDB" id="7Q3L">
    <property type="method" value="EM"/>
    <property type="resolution" value="2.30 A"/>
    <property type="chains" value="E=1-86"/>
</dbReference>
<dbReference type="PDB" id="7Q4O">
    <property type="method" value="EM"/>
    <property type="resolution" value="2.20 A"/>
    <property type="chains" value="E=1-86"/>
</dbReference>
<dbReference type="PDB" id="7Q4P">
    <property type="method" value="EM"/>
    <property type="resolution" value="2.20 A"/>
    <property type="chains" value="E=1-86"/>
</dbReference>
<dbReference type="PDB" id="7QTT">
    <property type="method" value="EM"/>
    <property type="resolution" value="3.10 A"/>
    <property type="chains" value="B=1-86"/>
</dbReference>
<dbReference type="PDB" id="7VPX">
    <property type="method" value="EM"/>
    <property type="resolution" value="3.00 A"/>
    <property type="chains" value="5=1-86"/>
</dbReference>
<dbReference type="PDB" id="8CH6">
    <property type="method" value="EM"/>
    <property type="resolution" value="5.90 A"/>
    <property type="chains" value="B=1-86"/>
</dbReference>
<dbReference type="PDB" id="8H6E">
    <property type="method" value="EM"/>
    <property type="resolution" value="3.20 A"/>
    <property type="chains" value="2M=1-86"/>
</dbReference>
<dbReference type="PDB" id="8H6J">
    <property type="method" value="EM"/>
    <property type="resolution" value="3.25 A"/>
    <property type="chains" value="2M=1-86"/>
</dbReference>
<dbReference type="PDB" id="8H6K">
    <property type="method" value="EM"/>
    <property type="resolution" value="2.70 A"/>
    <property type="chains" value="2M=1-86"/>
</dbReference>
<dbReference type="PDB" id="8H6L">
    <property type="method" value="EM"/>
    <property type="resolution" value="2.60 A"/>
    <property type="chains" value="2M=1-86"/>
</dbReference>
<dbReference type="PDB" id="8H7G">
    <property type="method" value="EM"/>
    <property type="resolution" value="3.70 A"/>
    <property type="chains" value="B=1-86"/>
</dbReference>
<dbReference type="PDB" id="8HK1">
    <property type="method" value="EM"/>
    <property type="resolution" value="2.70 A"/>
    <property type="chains" value="5=1-86"/>
</dbReference>
<dbReference type="PDB" id="8I0P">
    <property type="method" value="EM"/>
    <property type="resolution" value="3.40 A"/>
    <property type="chains" value="5=1-86"/>
</dbReference>
<dbReference type="PDB" id="8I0R">
    <property type="method" value="EM"/>
    <property type="resolution" value="3.00 A"/>
    <property type="chains" value="5=1-86"/>
</dbReference>
<dbReference type="PDB" id="8I0S">
    <property type="method" value="EM"/>
    <property type="resolution" value="4.20 A"/>
    <property type="chains" value="5=1-86"/>
</dbReference>
<dbReference type="PDB" id="8I0T">
    <property type="method" value="EM"/>
    <property type="resolution" value="3.00 A"/>
    <property type="chains" value="5=1-86"/>
</dbReference>
<dbReference type="PDB" id="8I0U">
    <property type="method" value="EM"/>
    <property type="resolution" value="3.30 A"/>
    <property type="chains" value="5=1-86"/>
</dbReference>
<dbReference type="PDB" id="8I0V">
    <property type="method" value="EM"/>
    <property type="resolution" value="3.00 A"/>
    <property type="chains" value="5=1-86"/>
</dbReference>
<dbReference type="PDB" id="8QO9">
    <property type="method" value="EM"/>
    <property type="resolution" value="5.29 A"/>
    <property type="chains" value="B5=1-86"/>
</dbReference>
<dbReference type="PDB" id="8QXD">
    <property type="method" value="EM"/>
    <property type="resolution" value="9.60 A"/>
    <property type="chains" value="B5=1-86"/>
</dbReference>
<dbReference type="PDB" id="8QZS">
    <property type="method" value="EM"/>
    <property type="resolution" value="4.10 A"/>
    <property type="chains" value="B5=1-86"/>
</dbReference>
<dbReference type="PDB" id="8R08">
    <property type="method" value="EM"/>
    <property type="resolution" value="6.10 A"/>
    <property type="chains" value="B5=1-86"/>
</dbReference>
<dbReference type="PDB" id="8R09">
    <property type="method" value="EM"/>
    <property type="resolution" value="4.30 A"/>
    <property type="chains" value="B5=1-86"/>
</dbReference>
<dbReference type="PDB" id="8R0A">
    <property type="method" value="EM"/>
    <property type="resolution" value="5.80 A"/>
    <property type="chains" value="B5=1-86"/>
</dbReference>
<dbReference type="PDB" id="8R0B">
    <property type="method" value="EM"/>
    <property type="resolution" value="4.40 A"/>
    <property type="chains" value="B5=1-86"/>
</dbReference>
<dbReference type="PDB" id="8RM5">
    <property type="method" value="EM"/>
    <property type="resolution" value="6.90 A"/>
    <property type="chains" value="B5=1-86"/>
</dbReference>
<dbReference type="PDB" id="8Y7E">
    <property type="method" value="EM"/>
    <property type="resolution" value="4.66 A"/>
    <property type="chains" value="7=1-86"/>
</dbReference>
<dbReference type="PDBsum" id="5IFE"/>
<dbReference type="PDBsum" id="5O9Z"/>
<dbReference type="PDBsum" id="5Z56"/>
<dbReference type="PDBsum" id="5Z57"/>
<dbReference type="PDBsum" id="5Z58"/>
<dbReference type="PDBsum" id="5ZYA"/>
<dbReference type="PDBsum" id="6AH0"/>
<dbReference type="PDBsum" id="6EN4"/>
<dbReference type="PDBsum" id="6FF4"/>
<dbReference type="PDBsum" id="6FF7"/>
<dbReference type="PDBsum" id="6QX9"/>
<dbReference type="PDBsum" id="6Y50"/>
<dbReference type="PDBsum" id="6Y5Q"/>
<dbReference type="PDBsum" id="7ABG"/>
<dbReference type="PDBsum" id="7ABH"/>
<dbReference type="PDBsum" id="7ABI"/>
<dbReference type="PDBsum" id="7B0I"/>
<dbReference type="PDBsum" id="7B91"/>
<dbReference type="PDBsum" id="7B92"/>
<dbReference type="PDBsum" id="7B9C"/>
<dbReference type="PDBsum" id="7DVQ"/>
<dbReference type="PDBsum" id="7EVN"/>
<dbReference type="PDBsum" id="7EVO"/>
<dbReference type="PDBsum" id="7KTS"/>
<dbReference type="PDBsum" id="7OMF"/>
<dbReference type="PDBsum" id="7ONB"/>
<dbReference type="PDBsum" id="7OPI"/>
<dbReference type="PDBsum" id="7Q3L"/>
<dbReference type="PDBsum" id="7Q4O"/>
<dbReference type="PDBsum" id="7Q4P"/>
<dbReference type="PDBsum" id="7QTT"/>
<dbReference type="PDBsum" id="7VPX"/>
<dbReference type="PDBsum" id="8CH6"/>
<dbReference type="PDBsum" id="8H6E"/>
<dbReference type="PDBsum" id="8H6J"/>
<dbReference type="PDBsum" id="8H6K"/>
<dbReference type="PDBsum" id="8H6L"/>
<dbReference type="PDBsum" id="8H7G"/>
<dbReference type="PDBsum" id="8HK1"/>
<dbReference type="PDBsum" id="8I0P"/>
<dbReference type="PDBsum" id="8I0R"/>
<dbReference type="PDBsum" id="8I0S"/>
<dbReference type="PDBsum" id="8I0T"/>
<dbReference type="PDBsum" id="8I0U"/>
<dbReference type="PDBsum" id="8I0V"/>
<dbReference type="PDBsum" id="8QO9"/>
<dbReference type="PDBsum" id="8QXD"/>
<dbReference type="PDBsum" id="8QZS"/>
<dbReference type="PDBsum" id="8R08"/>
<dbReference type="PDBsum" id="8R09"/>
<dbReference type="PDBsum" id="8R0A"/>
<dbReference type="PDBsum" id="8R0B"/>
<dbReference type="PDBsum" id="8RM5"/>
<dbReference type="PDBsum" id="8Y7E"/>
<dbReference type="EMDB" id="EMD-10688"/>
<dbReference type="EMDB" id="EMD-11695"/>
<dbReference type="EMDB" id="EMD-11696"/>
<dbReference type="EMDB" id="EMD-11697"/>
<dbReference type="EMDB" id="EMD-12994"/>
<dbReference type="EMDB" id="EMD-13793"/>
<dbReference type="EMDB" id="EMD-13811"/>
<dbReference type="EMDB" id="EMD-13812"/>
<dbReference type="EMDB" id="EMD-14146"/>
<dbReference type="EMDB" id="EMD-16658"/>
<dbReference type="EMDB" id="EMD-18529"/>
<dbReference type="EMDB" id="EMD-18718"/>
<dbReference type="EMDB" id="EMD-18781"/>
<dbReference type="EMDB" id="EMD-18786"/>
<dbReference type="EMDB" id="EMD-18787"/>
<dbReference type="EMDB" id="EMD-18788"/>
<dbReference type="EMDB" id="EMD-18789"/>
<dbReference type="EMDB" id="EMD-19349"/>
<dbReference type="EMDB" id="EMD-23028"/>
<dbReference type="EMDB" id="EMD-30875"/>
<dbReference type="EMDB" id="EMD-31330"/>
<dbReference type="EMDB" id="EMD-31334"/>
<dbReference type="EMDB" id="EMD-32074"/>
<dbReference type="EMDB" id="EMD-34500"/>
<dbReference type="EMDB" id="EMD-34505"/>
<dbReference type="EMDB" id="EMD-34507"/>
<dbReference type="EMDB" id="EMD-34508"/>
<dbReference type="EMDB" id="EMD-34520"/>
<dbReference type="EMDB" id="EMD-34841"/>
<dbReference type="EMDB" id="EMD-35105"/>
<dbReference type="EMDB" id="EMD-35107"/>
<dbReference type="EMDB" id="EMD-35108"/>
<dbReference type="EMDB" id="EMD-35109"/>
<dbReference type="EMDB" id="EMD-35110"/>
<dbReference type="EMDB" id="EMD-35111"/>
<dbReference type="EMDB" id="EMD-3766"/>
<dbReference type="EMDB" id="EMD-39013"/>
<dbReference type="EMDB" id="EMD-4255"/>
<dbReference type="EMDB" id="EMD-4665"/>
<dbReference type="EMDB" id="EMD-6889"/>
<dbReference type="EMDB" id="EMD-6890"/>
<dbReference type="EMDB" id="EMD-6891"/>
<dbReference type="EMDB" id="EMD-6915"/>
<dbReference type="EMDB" id="EMD-9621"/>
<dbReference type="EMDB" id="EMD-9624"/>
<dbReference type="SMR" id="Q9BWJ5"/>
<dbReference type="BioGRID" id="123645">
    <property type="interactions" value="143"/>
</dbReference>
<dbReference type="ComplexPortal" id="CPX-2227">
    <property type="entry name" value="SF3B complex"/>
</dbReference>
<dbReference type="ComplexPortal" id="CPX-2539">
    <property type="entry name" value="U2 small nuclear ribonucleoprotein complex"/>
</dbReference>
<dbReference type="ComplexPortal" id="CPX-6802">
    <property type="entry name" value="SAGA complex, KAT2B variant"/>
</dbReference>
<dbReference type="ComplexPortal" id="CPX-900">
    <property type="entry name" value="SAGA complex, KAT2A variant"/>
</dbReference>
<dbReference type="CORUM" id="Q9BWJ5"/>
<dbReference type="FunCoup" id="Q9BWJ5">
    <property type="interactions" value="1616"/>
</dbReference>
<dbReference type="IntAct" id="Q9BWJ5">
    <property type="interactions" value="73"/>
</dbReference>
<dbReference type="MINT" id="Q9BWJ5"/>
<dbReference type="STRING" id="9606.ENSP00000356541"/>
<dbReference type="GlyGen" id="Q9BWJ5">
    <property type="glycosylation" value="1 site, 1 O-linked glycan (1 site)"/>
</dbReference>
<dbReference type="iPTMnet" id="Q9BWJ5"/>
<dbReference type="MetOSite" id="Q9BWJ5"/>
<dbReference type="PhosphoSitePlus" id="Q9BWJ5"/>
<dbReference type="BioMuta" id="SF3B5"/>
<dbReference type="DMDM" id="20140757"/>
<dbReference type="jPOST" id="Q9BWJ5"/>
<dbReference type="MassIVE" id="Q9BWJ5"/>
<dbReference type="PaxDb" id="9606-ENSP00000356541"/>
<dbReference type="PeptideAtlas" id="Q9BWJ5"/>
<dbReference type="ProteomicsDB" id="79283"/>
<dbReference type="Pumba" id="Q9BWJ5"/>
<dbReference type="TopDownProteomics" id="Q9BWJ5"/>
<dbReference type="Antibodypedia" id="46681">
    <property type="antibodies" value="47 antibodies from 19 providers"/>
</dbReference>
<dbReference type="DNASU" id="83443"/>
<dbReference type="Ensembl" id="ENST00000367569.4">
    <property type="protein sequence ID" value="ENSP00000356541.2"/>
    <property type="gene ID" value="ENSG00000169976.7"/>
</dbReference>
<dbReference type="GeneID" id="83443"/>
<dbReference type="KEGG" id="hsa:83443"/>
<dbReference type="MANE-Select" id="ENST00000367569.4">
    <property type="protein sequence ID" value="ENSP00000356541.2"/>
    <property type="RefSeq nucleotide sequence ID" value="NM_031287.3"/>
    <property type="RefSeq protein sequence ID" value="NP_112577.1"/>
</dbReference>
<dbReference type="UCSC" id="uc003qkr.2">
    <property type="organism name" value="human"/>
</dbReference>
<dbReference type="AGR" id="HGNC:21083"/>
<dbReference type="CTD" id="83443"/>
<dbReference type="GeneCards" id="SF3B5"/>
<dbReference type="HGNC" id="HGNC:21083">
    <property type="gene designation" value="SF3B5"/>
</dbReference>
<dbReference type="HPA" id="ENSG00000169976">
    <property type="expression patterns" value="Low tissue specificity"/>
</dbReference>
<dbReference type="MIM" id="617847">
    <property type="type" value="gene"/>
</dbReference>
<dbReference type="neXtProt" id="NX_Q9BWJ5"/>
<dbReference type="OpenTargets" id="ENSG00000169976"/>
<dbReference type="PharmGKB" id="PA134951632"/>
<dbReference type="VEuPathDB" id="HostDB:ENSG00000169976"/>
<dbReference type="eggNOG" id="KOG3485">
    <property type="taxonomic scope" value="Eukaryota"/>
</dbReference>
<dbReference type="GeneTree" id="ENSGT00390000013215"/>
<dbReference type="HOGENOM" id="CLU_138804_3_1_1"/>
<dbReference type="InParanoid" id="Q9BWJ5"/>
<dbReference type="OMA" id="YDRFNIH"/>
<dbReference type="OrthoDB" id="274726at2759"/>
<dbReference type="PAN-GO" id="Q9BWJ5">
    <property type="GO annotations" value="3 GO annotations based on evolutionary models"/>
</dbReference>
<dbReference type="PhylomeDB" id="Q9BWJ5"/>
<dbReference type="TreeFam" id="TF300117"/>
<dbReference type="PathwayCommons" id="Q9BWJ5"/>
<dbReference type="Reactome" id="R-HSA-72163">
    <property type="pathway name" value="mRNA Splicing - Major Pathway"/>
</dbReference>
<dbReference type="Reactome" id="R-HSA-72165">
    <property type="pathway name" value="mRNA Splicing - Minor Pathway"/>
</dbReference>
<dbReference type="SignaLink" id="Q9BWJ5"/>
<dbReference type="SIGNOR" id="Q9BWJ5"/>
<dbReference type="BioGRID-ORCS" id="83443">
    <property type="hits" value="839 hits in 1168 CRISPR screens"/>
</dbReference>
<dbReference type="ChiTaRS" id="SF3B5">
    <property type="organism name" value="human"/>
</dbReference>
<dbReference type="GeneWiki" id="SF3B5"/>
<dbReference type="GenomeRNAi" id="83443"/>
<dbReference type="Pharos" id="Q9BWJ5">
    <property type="development level" value="Tdark"/>
</dbReference>
<dbReference type="PRO" id="PR:Q9BWJ5"/>
<dbReference type="Proteomes" id="UP000005640">
    <property type="component" value="Chromosome 6"/>
</dbReference>
<dbReference type="RNAct" id="Q9BWJ5">
    <property type="molecule type" value="protein"/>
</dbReference>
<dbReference type="Bgee" id="ENSG00000169976">
    <property type="expression patterns" value="Expressed in adenohypophysis and 205 other cell types or tissues"/>
</dbReference>
<dbReference type="GO" id="GO:0005654">
    <property type="term" value="C:nucleoplasm"/>
    <property type="evidence" value="ECO:0000314"/>
    <property type="project" value="HPA"/>
</dbReference>
<dbReference type="GO" id="GO:0005634">
    <property type="term" value="C:nucleus"/>
    <property type="evidence" value="ECO:0000314"/>
    <property type="project" value="UniProtKB"/>
</dbReference>
<dbReference type="GO" id="GO:0071011">
    <property type="term" value="C:precatalytic spliceosome"/>
    <property type="evidence" value="ECO:0000318"/>
    <property type="project" value="GO_Central"/>
</dbReference>
<dbReference type="GO" id="GO:0000124">
    <property type="term" value="C:SAGA complex"/>
    <property type="evidence" value="ECO:0000303"/>
    <property type="project" value="ComplexPortal"/>
</dbReference>
<dbReference type="GO" id="GO:0005681">
    <property type="term" value="C:spliceosomal complex"/>
    <property type="evidence" value="ECO:0000303"/>
    <property type="project" value="ComplexPortal"/>
</dbReference>
<dbReference type="GO" id="GO:0005689">
    <property type="term" value="C:U12-type spliceosomal complex"/>
    <property type="evidence" value="ECO:0000314"/>
    <property type="project" value="UniProtKB"/>
</dbReference>
<dbReference type="GO" id="GO:0005686">
    <property type="term" value="C:U2 snRNP"/>
    <property type="evidence" value="ECO:0000318"/>
    <property type="project" value="GO_Central"/>
</dbReference>
<dbReference type="GO" id="GO:0071005">
    <property type="term" value="C:U2-type precatalytic spliceosome"/>
    <property type="evidence" value="ECO:0000314"/>
    <property type="project" value="UniProtKB"/>
</dbReference>
<dbReference type="GO" id="GO:0005684">
    <property type="term" value="C:U2-type spliceosomal complex"/>
    <property type="evidence" value="ECO:0000314"/>
    <property type="project" value="UniProtKB"/>
</dbReference>
<dbReference type="GO" id="GO:0003723">
    <property type="term" value="F:RNA binding"/>
    <property type="evidence" value="ECO:0000314"/>
    <property type="project" value="UniProtKB"/>
</dbReference>
<dbReference type="GO" id="GO:1990935">
    <property type="term" value="F:splicing factor binding"/>
    <property type="evidence" value="ECO:0000314"/>
    <property type="project" value="UniProtKB"/>
</dbReference>
<dbReference type="GO" id="GO:0000398">
    <property type="term" value="P:mRNA splicing, via spliceosome"/>
    <property type="evidence" value="ECO:0000314"/>
    <property type="project" value="UniProtKB"/>
</dbReference>
<dbReference type="GO" id="GO:0045893">
    <property type="term" value="P:positive regulation of DNA-templated transcription"/>
    <property type="evidence" value="ECO:0000303"/>
    <property type="project" value="ComplexPortal"/>
</dbReference>
<dbReference type="GO" id="GO:0006282">
    <property type="term" value="P:regulation of DNA repair"/>
    <property type="evidence" value="ECO:0000303"/>
    <property type="project" value="ComplexPortal"/>
</dbReference>
<dbReference type="GO" id="GO:0043484">
    <property type="term" value="P:regulation of RNA splicing"/>
    <property type="evidence" value="ECO:0000303"/>
    <property type="project" value="ComplexPortal"/>
</dbReference>
<dbReference type="GO" id="GO:1903241">
    <property type="term" value="P:U2-type prespliceosome assembly"/>
    <property type="evidence" value="ECO:0000303"/>
    <property type="project" value="ComplexPortal"/>
</dbReference>
<dbReference type="InterPro" id="IPR009846">
    <property type="entry name" value="SF3b5/RDS3-10"/>
</dbReference>
<dbReference type="InterPro" id="IPR017089">
    <property type="entry name" value="Splicing_factor_3B_subunit_5"/>
</dbReference>
<dbReference type="PANTHER" id="PTHR20978">
    <property type="entry name" value="SPLICING FACTOR 3B SUBUNIT 5"/>
    <property type="match status" value="1"/>
</dbReference>
<dbReference type="PANTHER" id="PTHR20978:SF0">
    <property type="entry name" value="SPLICING FACTOR 3B SUBUNIT 5"/>
    <property type="match status" value="1"/>
</dbReference>
<dbReference type="Pfam" id="PF07189">
    <property type="entry name" value="SF3b10"/>
    <property type="match status" value="1"/>
</dbReference>
<dbReference type="PIRSF" id="PIRSF037010">
    <property type="entry name" value="Splicing_factor_3B_subunit_5"/>
    <property type="match status" value="1"/>
</dbReference>
<organism>
    <name type="scientific">Homo sapiens</name>
    <name type="common">Human</name>
    <dbReference type="NCBI Taxonomy" id="9606"/>
    <lineage>
        <taxon>Eukaryota</taxon>
        <taxon>Metazoa</taxon>
        <taxon>Chordata</taxon>
        <taxon>Craniata</taxon>
        <taxon>Vertebrata</taxon>
        <taxon>Euteleostomi</taxon>
        <taxon>Mammalia</taxon>
        <taxon>Eutheria</taxon>
        <taxon>Euarchontoglires</taxon>
        <taxon>Primates</taxon>
        <taxon>Haplorrhini</taxon>
        <taxon>Catarrhini</taxon>
        <taxon>Hominidae</taxon>
        <taxon>Homo</taxon>
    </lineage>
</organism>
<protein>
    <recommendedName>
        <fullName>Splicing factor 3B subunit 5</fullName>
        <shortName>SF3b5</shortName>
    </recommendedName>
    <alternativeName>
        <fullName>Pre-mRNA-splicing factor SF3b 10 kDa subunit</fullName>
    </alternativeName>
</protein>
<evidence type="ECO:0000269" key="1">
    <source>
    </source>
</evidence>
<evidence type="ECO:0000269" key="2">
    <source>
    </source>
</evidence>
<evidence type="ECO:0000269" key="3">
    <source>
    </source>
</evidence>
<evidence type="ECO:0000269" key="4">
    <source>
    </source>
</evidence>
<evidence type="ECO:0000269" key="5">
    <source>
    </source>
</evidence>
<evidence type="ECO:0000269" key="6">
    <source>
    </source>
</evidence>
<evidence type="ECO:0000269" key="7">
    <source>
    </source>
</evidence>
<evidence type="ECO:0000269" key="8">
    <source>
    </source>
</evidence>
<evidence type="ECO:0000269" key="9">
    <source>
    </source>
</evidence>
<evidence type="ECO:0000269" key="10">
    <source>
    </source>
</evidence>
<evidence type="ECO:0000305" key="11"/>
<evidence type="ECO:0007744" key="12">
    <source>
        <dbReference type="PDB" id="5O9Z"/>
    </source>
</evidence>
<evidence type="ECO:0007744" key="13">
    <source>
        <dbReference type="PDB" id="6Y50"/>
    </source>
</evidence>
<evidence type="ECO:0007744" key="14">
    <source>
        <dbReference type="PDB" id="6Y5Q"/>
    </source>
</evidence>
<evidence type="ECO:0007744" key="15">
    <source>
        <dbReference type="PDB" id="7DVQ"/>
    </source>
</evidence>
<evidence type="ECO:0007744" key="16">
    <source>
        <dbReference type="PDB" id="7Q3L"/>
    </source>
</evidence>
<evidence type="ECO:0007744" key="17">
    <source>
        <dbReference type="PDB" id="8HK1"/>
    </source>
</evidence>
<evidence type="ECO:0007744" key="18">
    <source>
    </source>
</evidence>
<evidence type="ECO:0007744" key="19">
    <source>
    </source>
</evidence>
<evidence type="ECO:0007744" key="20">
    <source>
    </source>
</evidence>
<evidence type="ECO:0007829" key="21">
    <source>
        <dbReference type="PDB" id="7Q3L"/>
    </source>
</evidence>
<evidence type="ECO:0007829" key="22">
    <source>
        <dbReference type="PDB" id="7Q4O"/>
    </source>
</evidence>
<evidence type="ECO:0007829" key="23">
    <source>
        <dbReference type="PDB" id="7Q4P"/>
    </source>
</evidence>
<name>SF3B5_HUMAN</name>